<protein>
    <recommendedName>
        <fullName evidence="1">4-diphosphocytidyl-2-C-methyl-D-erythritol kinase</fullName>
        <shortName evidence="1">CMK</shortName>
        <ecNumber evidence="1">2.7.1.148</ecNumber>
    </recommendedName>
    <alternativeName>
        <fullName evidence="1">4-(cytidine-5'-diphospho)-2-C-methyl-D-erythritol kinase</fullName>
    </alternativeName>
</protein>
<organism>
    <name type="scientific">Bordetella parapertussis (strain 12822 / ATCC BAA-587 / NCTC 13253)</name>
    <dbReference type="NCBI Taxonomy" id="257311"/>
    <lineage>
        <taxon>Bacteria</taxon>
        <taxon>Pseudomonadati</taxon>
        <taxon>Pseudomonadota</taxon>
        <taxon>Betaproteobacteria</taxon>
        <taxon>Burkholderiales</taxon>
        <taxon>Alcaligenaceae</taxon>
        <taxon>Bordetella</taxon>
    </lineage>
</organism>
<feature type="chain" id="PRO_0000189192" description="4-diphosphocytidyl-2-C-methyl-D-erythritol kinase">
    <location>
        <begin position="1"/>
        <end position="299"/>
    </location>
</feature>
<feature type="active site" evidence="1">
    <location>
        <position position="11"/>
    </location>
</feature>
<feature type="active site" evidence="1">
    <location>
        <position position="136"/>
    </location>
</feature>
<feature type="binding site" evidence="1">
    <location>
        <begin position="94"/>
        <end position="104"/>
    </location>
    <ligand>
        <name>ATP</name>
        <dbReference type="ChEBI" id="CHEBI:30616"/>
    </ligand>
</feature>
<dbReference type="EC" id="2.7.1.148" evidence="1"/>
<dbReference type="EMBL" id="BX640425">
    <property type="protein sequence ID" value="CAE40225.1"/>
    <property type="molecule type" value="Genomic_DNA"/>
</dbReference>
<dbReference type="RefSeq" id="WP_010927698.1">
    <property type="nucleotide sequence ID" value="NC_002928.3"/>
</dbReference>
<dbReference type="SMR" id="Q7W182"/>
<dbReference type="GeneID" id="93202566"/>
<dbReference type="KEGG" id="bpa:BPP0816"/>
<dbReference type="HOGENOM" id="CLU_053057_3_0_4"/>
<dbReference type="UniPathway" id="UPA00056">
    <property type="reaction ID" value="UER00094"/>
</dbReference>
<dbReference type="Proteomes" id="UP000001421">
    <property type="component" value="Chromosome"/>
</dbReference>
<dbReference type="GO" id="GO:0050515">
    <property type="term" value="F:4-(cytidine 5'-diphospho)-2-C-methyl-D-erythritol kinase activity"/>
    <property type="evidence" value="ECO:0007669"/>
    <property type="project" value="UniProtKB-UniRule"/>
</dbReference>
<dbReference type="GO" id="GO:0005524">
    <property type="term" value="F:ATP binding"/>
    <property type="evidence" value="ECO:0007669"/>
    <property type="project" value="UniProtKB-UniRule"/>
</dbReference>
<dbReference type="GO" id="GO:0019288">
    <property type="term" value="P:isopentenyl diphosphate biosynthetic process, methylerythritol 4-phosphate pathway"/>
    <property type="evidence" value="ECO:0007669"/>
    <property type="project" value="UniProtKB-UniRule"/>
</dbReference>
<dbReference type="GO" id="GO:0016114">
    <property type="term" value="P:terpenoid biosynthetic process"/>
    <property type="evidence" value="ECO:0007669"/>
    <property type="project" value="InterPro"/>
</dbReference>
<dbReference type="Gene3D" id="3.30.230.10">
    <property type="match status" value="1"/>
</dbReference>
<dbReference type="Gene3D" id="3.30.70.890">
    <property type="entry name" value="GHMP kinase, C-terminal domain"/>
    <property type="match status" value="1"/>
</dbReference>
<dbReference type="HAMAP" id="MF_00061">
    <property type="entry name" value="IspE"/>
    <property type="match status" value="1"/>
</dbReference>
<dbReference type="InterPro" id="IPR013750">
    <property type="entry name" value="GHMP_kinase_C_dom"/>
</dbReference>
<dbReference type="InterPro" id="IPR036554">
    <property type="entry name" value="GHMP_kinase_C_sf"/>
</dbReference>
<dbReference type="InterPro" id="IPR006204">
    <property type="entry name" value="GHMP_kinase_N_dom"/>
</dbReference>
<dbReference type="InterPro" id="IPR004424">
    <property type="entry name" value="IspE"/>
</dbReference>
<dbReference type="InterPro" id="IPR020568">
    <property type="entry name" value="Ribosomal_Su5_D2-typ_SF"/>
</dbReference>
<dbReference type="InterPro" id="IPR014721">
    <property type="entry name" value="Ribsml_uS5_D2-typ_fold_subgr"/>
</dbReference>
<dbReference type="NCBIfam" id="TIGR00154">
    <property type="entry name" value="ispE"/>
    <property type="match status" value="1"/>
</dbReference>
<dbReference type="PANTHER" id="PTHR43527">
    <property type="entry name" value="4-DIPHOSPHOCYTIDYL-2-C-METHYL-D-ERYTHRITOL KINASE, CHLOROPLASTIC"/>
    <property type="match status" value="1"/>
</dbReference>
<dbReference type="PANTHER" id="PTHR43527:SF2">
    <property type="entry name" value="4-DIPHOSPHOCYTIDYL-2-C-METHYL-D-ERYTHRITOL KINASE, CHLOROPLASTIC"/>
    <property type="match status" value="1"/>
</dbReference>
<dbReference type="Pfam" id="PF08544">
    <property type="entry name" value="GHMP_kinases_C"/>
    <property type="match status" value="1"/>
</dbReference>
<dbReference type="Pfam" id="PF00288">
    <property type="entry name" value="GHMP_kinases_N"/>
    <property type="match status" value="1"/>
</dbReference>
<dbReference type="PIRSF" id="PIRSF010376">
    <property type="entry name" value="IspE"/>
    <property type="match status" value="1"/>
</dbReference>
<dbReference type="SUPFAM" id="SSF55060">
    <property type="entry name" value="GHMP Kinase, C-terminal domain"/>
    <property type="match status" value="1"/>
</dbReference>
<dbReference type="SUPFAM" id="SSF54211">
    <property type="entry name" value="Ribosomal protein S5 domain 2-like"/>
    <property type="match status" value="1"/>
</dbReference>
<evidence type="ECO:0000255" key="1">
    <source>
        <dbReference type="HAMAP-Rule" id="MF_00061"/>
    </source>
</evidence>
<gene>
    <name evidence="1" type="primary">ispE</name>
    <name type="synonym">ipk</name>
    <name type="ordered locus">BPP0816</name>
</gene>
<proteinExistence type="inferred from homology"/>
<reference key="1">
    <citation type="journal article" date="2003" name="Nat. Genet.">
        <title>Comparative analysis of the genome sequences of Bordetella pertussis, Bordetella parapertussis and Bordetella bronchiseptica.</title>
        <authorList>
            <person name="Parkhill J."/>
            <person name="Sebaihia M."/>
            <person name="Preston A."/>
            <person name="Murphy L.D."/>
            <person name="Thomson N.R."/>
            <person name="Harris D.E."/>
            <person name="Holden M.T.G."/>
            <person name="Churcher C.M."/>
            <person name="Bentley S.D."/>
            <person name="Mungall K.L."/>
            <person name="Cerdeno-Tarraga A.-M."/>
            <person name="Temple L."/>
            <person name="James K.D."/>
            <person name="Harris B."/>
            <person name="Quail M.A."/>
            <person name="Achtman M."/>
            <person name="Atkin R."/>
            <person name="Baker S."/>
            <person name="Basham D."/>
            <person name="Bason N."/>
            <person name="Cherevach I."/>
            <person name="Chillingworth T."/>
            <person name="Collins M."/>
            <person name="Cronin A."/>
            <person name="Davis P."/>
            <person name="Doggett J."/>
            <person name="Feltwell T."/>
            <person name="Goble A."/>
            <person name="Hamlin N."/>
            <person name="Hauser H."/>
            <person name="Holroyd S."/>
            <person name="Jagels K."/>
            <person name="Leather S."/>
            <person name="Moule S."/>
            <person name="Norberczak H."/>
            <person name="O'Neil S."/>
            <person name="Ormond D."/>
            <person name="Price C."/>
            <person name="Rabbinowitsch E."/>
            <person name="Rutter S."/>
            <person name="Sanders M."/>
            <person name="Saunders D."/>
            <person name="Seeger K."/>
            <person name="Sharp S."/>
            <person name="Simmonds M."/>
            <person name="Skelton J."/>
            <person name="Squares R."/>
            <person name="Squares S."/>
            <person name="Stevens K."/>
            <person name="Unwin L."/>
            <person name="Whitehead S."/>
            <person name="Barrell B.G."/>
            <person name="Maskell D.J."/>
        </authorList>
    </citation>
    <scope>NUCLEOTIDE SEQUENCE [LARGE SCALE GENOMIC DNA]</scope>
    <source>
        <strain>12822 / ATCC BAA-587 / NCTC 13253</strain>
    </source>
</reference>
<name>ISPE_BORPA</name>
<sequence>MTLYDVPAPAKLNLFLHVVGRRADGYHLLQTAFRFIDLADTLHFEARADGAIGRAYELPGVAESDDLVVRAARSLQRATGTRQGAQIGLHKRIPQGGGLGGGSSDAATTLIALNRLWGTGLSRSQLMQLALPLGADVPVFVFGQSAFAQGVGEDLTAVALPPAAYLVVQPDAGVPTAAIFSDPDLTRDCASVTIADFLALLTSCFGRNDLEPVVLRRYPEVSGAVRWLFEHGLRVRMSGSGACLFAEFPTLPEAVLAQEEITATMRVAGKTTSHTHPGFRLVQASTGLTEHPLRNWIAS</sequence>
<accession>Q7W182</accession>
<comment type="function">
    <text evidence="1">Catalyzes the phosphorylation of the position 2 hydroxy group of 4-diphosphocytidyl-2C-methyl-D-erythritol.</text>
</comment>
<comment type="catalytic activity">
    <reaction evidence="1">
        <text>4-CDP-2-C-methyl-D-erythritol + ATP = 4-CDP-2-C-methyl-D-erythritol 2-phosphate + ADP + H(+)</text>
        <dbReference type="Rhea" id="RHEA:18437"/>
        <dbReference type="ChEBI" id="CHEBI:15378"/>
        <dbReference type="ChEBI" id="CHEBI:30616"/>
        <dbReference type="ChEBI" id="CHEBI:57823"/>
        <dbReference type="ChEBI" id="CHEBI:57919"/>
        <dbReference type="ChEBI" id="CHEBI:456216"/>
        <dbReference type="EC" id="2.7.1.148"/>
    </reaction>
</comment>
<comment type="pathway">
    <text evidence="1">Isoprenoid biosynthesis; isopentenyl diphosphate biosynthesis via DXP pathway; isopentenyl diphosphate from 1-deoxy-D-xylulose 5-phosphate: step 3/6.</text>
</comment>
<comment type="similarity">
    <text evidence="1">Belongs to the GHMP kinase family. IspE subfamily.</text>
</comment>
<keyword id="KW-0067">ATP-binding</keyword>
<keyword id="KW-0414">Isoprene biosynthesis</keyword>
<keyword id="KW-0418">Kinase</keyword>
<keyword id="KW-0547">Nucleotide-binding</keyword>
<keyword id="KW-0808">Transferase</keyword>